<organism>
    <name type="scientific">Rattus norvegicus</name>
    <name type="common">Rat</name>
    <dbReference type="NCBI Taxonomy" id="10116"/>
    <lineage>
        <taxon>Eukaryota</taxon>
        <taxon>Metazoa</taxon>
        <taxon>Chordata</taxon>
        <taxon>Craniata</taxon>
        <taxon>Vertebrata</taxon>
        <taxon>Euteleostomi</taxon>
        <taxon>Mammalia</taxon>
        <taxon>Eutheria</taxon>
        <taxon>Euarchontoglires</taxon>
        <taxon>Glires</taxon>
        <taxon>Rodentia</taxon>
        <taxon>Myomorpha</taxon>
        <taxon>Muroidea</taxon>
        <taxon>Muridae</taxon>
        <taxon>Murinae</taxon>
        <taxon>Rattus</taxon>
    </lineage>
</organism>
<gene>
    <name type="primary">Cercam</name>
    <name type="synonym">Ceecam1</name>
    <name type="synonym">Glt25d3</name>
</gene>
<feature type="chain" id="PRO_0000309546" description="Probable inactive glycosyltransferase 25 family member 3">
    <location>
        <begin position="1"/>
        <end position="572"/>
    </location>
</feature>
<feature type="short sequence motif" description="Prevents secretion from ER" evidence="3">
    <location>
        <begin position="569"/>
        <end position="572"/>
    </location>
</feature>
<feature type="glycosylation site" description="N-linked (GlcNAc...) asparagine" evidence="2">
    <location>
        <position position="52"/>
    </location>
</feature>
<feature type="glycosylation site" description="N-linked (GlcNAc...) asparagine" evidence="2">
    <location>
        <position position="130"/>
    </location>
</feature>
<feature type="glycosylation site" description="N-linked (GlcNAc...) asparagine" evidence="2">
    <location>
        <position position="214"/>
    </location>
</feature>
<feature type="glycosylation site" description="N-linked (GlcNAc...) asparagine" evidence="2">
    <location>
        <position position="337"/>
    </location>
</feature>
<evidence type="ECO:0000250" key="1">
    <source>
        <dbReference type="UniProtKB" id="Q5T4B2"/>
    </source>
</evidence>
<evidence type="ECO:0000255" key="2"/>
<evidence type="ECO:0000255" key="3">
    <source>
        <dbReference type="PROSITE-ProRule" id="PRU10138"/>
    </source>
</evidence>
<evidence type="ECO:0000305" key="4"/>
<keyword id="KW-0130">Cell adhesion</keyword>
<keyword id="KW-0256">Endoplasmic reticulum</keyword>
<keyword id="KW-0325">Glycoprotein</keyword>
<keyword id="KW-1185">Reference proteome</keyword>
<accession>Q5U309</accession>
<name>GT253_RAT</name>
<comment type="function">
    <text evidence="1">Probable cell adhesion protein involved in leukocyte transmigration across the blood-brain barrier. Does not express any beta-galactosyltransferase activity in vitro.</text>
</comment>
<comment type="subcellular location">
    <subcellularLocation>
        <location evidence="3">Endoplasmic reticulum lumen</location>
    </subcellularLocation>
</comment>
<comment type="similarity">
    <text evidence="4">Belongs to the glycosyltransferase 25 family.</text>
</comment>
<comment type="sequence caution" evidence="4">
    <conflict type="erroneous initiation">
        <sequence resource="EMBL-CDS" id="AAH85782"/>
    </conflict>
</comment>
<proteinExistence type="evidence at transcript level"/>
<dbReference type="EMBL" id="BC085782">
    <property type="protein sequence ID" value="AAH85782.1"/>
    <property type="status" value="ALT_INIT"/>
    <property type="molecule type" value="mRNA"/>
</dbReference>
<dbReference type="RefSeq" id="NP_001011962.1">
    <property type="nucleotide sequence ID" value="NM_001011962.1"/>
</dbReference>
<dbReference type="RefSeq" id="XP_006233831.1">
    <property type="nucleotide sequence ID" value="XM_006233769.5"/>
</dbReference>
<dbReference type="RefSeq" id="XP_017447134.1">
    <property type="nucleotide sequence ID" value="XM_017591645.1"/>
</dbReference>
<dbReference type="RefSeq" id="XP_017447135.1">
    <property type="nucleotide sequence ID" value="XM_017591646.3"/>
</dbReference>
<dbReference type="RefSeq" id="XP_017447136.1">
    <property type="nucleotide sequence ID" value="XM_017591647.1"/>
</dbReference>
<dbReference type="RefSeq" id="XP_017447137.1">
    <property type="nucleotide sequence ID" value="XM_017591648.1"/>
</dbReference>
<dbReference type="RefSeq" id="XP_063139555.1">
    <property type="nucleotide sequence ID" value="XM_063283485.1"/>
</dbReference>
<dbReference type="RefSeq" id="XP_063139556.1">
    <property type="nucleotide sequence ID" value="XM_063283486.1"/>
</dbReference>
<dbReference type="SMR" id="Q5U309"/>
<dbReference type="FunCoup" id="Q5U309">
    <property type="interactions" value="92"/>
</dbReference>
<dbReference type="STRING" id="10116.ENSRNOP00000075363"/>
<dbReference type="CAZy" id="GT25">
    <property type="family name" value="Glycosyltransferase Family 25"/>
</dbReference>
<dbReference type="GlyCosmos" id="Q5U309">
    <property type="glycosylation" value="4 sites, No reported glycans"/>
</dbReference>
<dbReference type="GlyGen" id="Q5U309">
    <property type="glycosylation" value="4 sites"/>
</dbReference>
<dbReference type="PhosphoSitePlus" id="Q5U309"/>
<dbReference type="PaxDb" id="10116-ENSRNOP00000057689"/>
<dbReference type="GeneID" id="296616"/>
<dbReference type="UCSC" id="RGD:1304778">
    <property type="organism name" value="rat"/>
</dbReference>
<dbReference type="AGR" id="RGD:1304778"/>
<dbReference type="CTD" id="51148"/>
<dbReference type="RGD" id="1304778">
    <property type="gene designation" value="Cercam"/>
</dbReference>
<dbReference type="VEuPathDB" id="HostDB:ENSRNOG00000026604"/>
<dbReference type="eggNOG" id="KOG4179">
    <property type="taxonomic scope" value="Eukaryota"/>
</dbReference>
<dbReference type="HOGENOM" id="CLU_024037_2_0_1"/>
<dbReference type="InParanoid" id="Q5U309"/>
<dbReference type="PRO" id="PR:Q5U309"/>
<dbReference type="Proteomes" id="UP000002494">
    <property type="component" value="Chromosome 3"/>
</dbReference>
<dbReference type="Bgee" id="ENSRNOG00000026604">
    <property type="expression patterns" value="Expressed in esophagus and 19 other cell types or tissues"/>
</dbReference>
<dbReference type="ExpressionAtlas" id="Q5U309">
    <property type="expression patterns" value="baseline and differential"/>
</dbReference>
<dbReference type="GO" id="GO:0005788">
    <property type="term" value="C:endoplasmic reticulum lumen"/>
    <property type="evidence" value="ECO:0007669"/>
    <property type="project" value="UniProtKB-SubCell"/>
</dbReference>
<dbReference type="GO" id="GO:0042802">
    <property type="term" value="F:identical protein binding"/>
    <property type="evidence" value="ECO:0000266"/>
    <property type="project" value="RGD"/>
</dbReference>
<dbReference type="GO" id="GO:0007155">
    <property type="term" value="P:cell adhesion"/>
    <property type="evidence" value="ECO:0000266"/>
    <property type="project" value="RGD"/>
</dbReference>
<dbReference type="CDD" id="cd06532">
    <property type="entry name" value="Glyco_transf_25"/>
    <property type="match status" value="1"/>
</dbReference>
<dbReference type="InterPro" id="IPR050757">
    <property type="entry name" value="Collagen_mod_GT25"/>
</dbReference>
<dbReference type="InterPro" id="IPR002654">
    <property type="entry name" value="Glyco_trans_25"/>
</dbReference>
<dbReference type="InterPro" id="IPR029044">
    <property type="entry name" value="Nucleotide-diphossugar_trans"/>
</dbReference>
<dbReference type="PANTHER" id="PTHR10730:SF9">
    <property type="entry name" value="INACTIVE GLYCOSYLTRANSFERASE 25 FAMILY MEMBER 3"/>
    <property type="match status" value="1"/>
</dbReference>
<dbReference type="PANTHER" id="PTHR10730">
    <property type="entry name" value="PROCOLLAGEN-LYSINE,2-OXOGLUTARATE 5-DIOXYGENASE/GLYCOSYLTRANSFERASE 25 FAMILY MEMBER"/>
    <property type="match status" value="1"/>
</dbReference>
<dbReference type="Pfam" id="PF01755">
    <property type="entry name" value="Glyco_transf_25"/>
    <property type="match status" value="1"/>
</dbReference>
<dbReference type="SUPFAM" id="SSF53448">
    <property type="entry name" value="Nucleotide-diphospho-sugar transferases"/>
    <property type="match status" value="1"/>
</dbReference>
<dbReference type="PROSITE" id="PS00014">
    <property type="entry name" value="ER_TARGET"/>
    <property type="match status" value="1"/>
</dbReference>
<reference key="1">
    <citation type="journal article" date="2004" name="Genome Res.">
        <title>The status, quality, and expansion of the NIH full-length cDNA project: the Mammalian Gene Collection (MGC).</title>
        <authorList>
            <consortium name="The MGC Project Team"/>
        </authorList>
    </citation>
    <scope>NUCLEOTIDE SEQUENCE [LARGE SCALE MRNA]</scope>
    <source>
        <tissue>Kidney</tissue>
    </source>
</reference>
<sequence length="572" mass="65223">MLFIIRARACGGDARSWKQPDQLHPILFTNLRLPLQLIASSAGGATDHNVDNTTGMLQEWLAAVGRDYATVVWKSEDEARSYPDEQGPKHWTRERHQFLMELKQEALAFARDWGADYILFADTDNILTNNQTLRLLIDRQLPVVAPMLDSQTYYSNFWCGITPQGYYRRTAEYFPTKNRQRQGCFRVPMVHSTFLVSLQTEETARLAFYPPHPNYTWPFDDIIVFAYACQAAGVSVHVCNDHRYGYMNVGVKPHQGLEEEKTNFIHLILEALVDGPPMMASAHVSRPPKKPSKMGFDEVFVISLARRPQRRARMLSSLWEMEISARVVDAVDGRTLNSSILKHLGVDLLPGYQDPYSGRTLTKGEVGCFLSHYSIWEEVVAKGLARVVVFEDDVRFEDNFRKRLERLMEDVLTQKLSWDLIYLGRKQVNPEEEVAVEGLPGLVVAGYSYWTLAYTLSLAGARKLLASQPLHRMLPVDEFLPVMFDRHPNDQYKAHFWPRDLQAFSARPLLASPTHYAGDTEWLSDTETSSPWDDDSGRLISWTGSQKTLRGPYLHLAGSSGHSLHPHPRDEL</sequence>
<protein>
    <recommendedName>
        <fullName>Probable inactive glycosyltransferase 25 family member 3</fullName>
    </recommendedName>
    <alternativeName>
        <fullName>Cerebral endothelial cell adhesion molecule</fullName>
    </alternativeName>
</protein>